<gene>
    <name type="ORF">DDB_G0283293</name>
</gene>
<dbReference type="EC" id="1.2.1.88"/>
<dbReference type="EMBL" id="AAFI02000052">
    <property type="protein sequence ID" value="EAL65787.1"/>
    <property type="molecule type" value="Genomic_DNA"/>
</dbReference>
<dbReference type="RefSeq" id="XP_639145.1">
    <property type="nucleotide sequence ID" value="XM_634053.1"/>
</dbReference>
<dbReference type="SMR" id="Q54RA2"/>
<dbReference type="FunCoup" id="Q54RA2">
    <property type="interactions" value="371"/>
</dbReference>
<dbReference type="STRING" id="44689.Q54RA2"/>
<dbReference type="PaxDb" id="44689-DDB0229934"/>
<dbReference type="EnsemblProtists" id="EAL65787">
    <property type="protein sequence ID" value="EAL65787"/>
    <property type="gene ID" value="DDB_G0283293"/>
</dbReference>
<dbReference type="GeneID" id="8624016"/>
<dbReference type="KEGG" id="ddi:DDB_G0283293"/>
<dbReference type="dictyBase" id="DDB_G0283293"/>
<dbReference type="VEuPathDB" id="AmoebaDB:DDB_G0283293"/>
<dbReference type="eggNOG" id="KOG2455">
    <property type="taxonomic scope" value="Eukaryota"/>
</dbReference>
<dbReference type="HOGENOM" id="CLU_005391_4_1_1"/>
<dbReference type="InParanoid" id="Q54RA2"/>
<dbReference type="OMA" id="FAGIHFT"/>
<dbReference type="PhylomeDB" id="Q54RA2"/>
<dbReference type="UniPathway" id="UPA00261">
    <property type="reaction ID" value="UER00374"/>
</dbReference>
<dbReference type="PRO" id="PR:Q54RA2"/>
<dbReference type="Proteomes" id="UP000002195">
    <property type="component" value="Chromosome 4"/>
</dbReference>
<dbReference type="GO" id="GO:0005759">
    <property type="term" value="C:mitochondrial matrix"/>
    <property type="evidence" value="ECO:0000318"/>
    <property type="project" value="GO_Central"/>
</dbReference>
<dbReference type="GO" id="GO:0003842">
    <property type="term" value="F:1-pyrroline-5-carboxylate dehydrogenase activity"/>
    <property type="evidence" value="ECO:0000318"/>
    <property type="project" value="GO_Central"/>
</dbReference>
<dbReference type="GO" id="GO:0010133">
    <property type="term" value="P:proline catabolic process to glutamate"/>
    <property type="evidence" value="ECO:0000318"/>
    <property type="project" value="GO_Central"/>
</dbReference>
<dbReference type="CDD" id="cd07123">
    <property type="entry name" value="ALDH_F4-17_P5CDH"/>
    <property type="match status" value="1"/>
</dbReference>
<dbReference type="FunFam" id="3.40.605.10:FF:000006">
    <property type="entry name" value="1-pyrroline-5-carboxylate dehydrogenase"/>
    <property type="match status" value="1"/>
</dbReference>
<dbReference type="FunFam" id="3.40.309.10:FF:000005">
    <property type="entry name" value="1-pyrroline-5-carboxylate dehydrogenase 1"/>
    <property type="match status" value="1"/>
</dbReference>
<dbReference type="Gene3D" id="3.40.605.10">
    <property type="entry name" value="Aldehyde Dehydrogenase, Chain A, domain 1"/>
    <property type="match status" value="1"/>
</dbReference>
<dbReference type="Gene3D" id="3.40.309.10">
    <property type="entry name" value="Aldehyde Dehydrogenase, Chain A, domain 2"/>
    <property type="match status" value="1"/>
</dbReference>
<dbReference type="InterPro" id="IPR016161">
    <property type="entry name" value="Ald_DH/histidinol_DH"/>
</dbReference>
<dbReference type="InterPro" id="IPR016163">
    <property type="entry name" value="Ald_DH_C"/>
</dbReference>
<dbReference type="InterPro" id="IPR016160">
    <property type="entry name" value="Ald_DH_CS_CYS"/>
</dbReference>
<dbReference type="InterPro" id="IPR016162">
    <property type="entry name" value="Ald_DH_N"/>
</dbReference>
<dbReference type="InterPro" id="IPR015590">
    <property type="entry name" value="Aldehyde_DH_dom"/>
</dbReference>
<dbReference type="InterPro" id="IPR005931">
    <property type="entry name" value="P5CDH/ALDH4A1"/>
</dbReference>
<dbReference type="InterPro" id="IPR050485">
    <property type="entry name" value="Proline_metab_enzyme"/>
</dbReference>
<dbReference type="NCBIfam" id="TIGR01236">
    <property type="entry name" value="D1pyr5carbox1"/>
    <property type="match status" value="1"/>
</dbReference>
<dbReference type="PANTHER" id="PTHR42862">
    <property type="entry name" value="DELTA-1-PYRROLINE-5-CARBOXYLATE DEHYDROGENASE 1, ISOFORM A-RELATED"/>
    <property type="match status" value="1"/>
</dbReference>
<dbReference type="PANTHER" id="PTHR42862:SF1">
    <property type="entry name" value="DELTA-1-PYRROLINE-5-CARBOXYLATE DEHYDROGENASE 2, ISOFORM A-RELATED"/>
    <property type="match status" value="1"/>
</dbReference>
<dbReference type="Pfam" id="PF00171">
    <property type="entry name" value="Aldedh"/>
    <property type="match status" value="1"/>
</dbReference>
<dbReference type="SUPFAM" id="SSF53720">
    <property type="entry name" value="ALDH-like"/>
    <property type="match status" value="1"/>
</dbReference>
<dbReference type="PROSITE" id="PS00070">
    <property type="entry name" value="ALDEHYDE_DEHYDR_CYS"/>
    <property type="match status" value="1"/>
</dbReference>
<dbReference type="PROSITE" id="PS00687">
    <property type="entry name" value="ALDEHYDE_DEHYDR_GLU"/>
    <property type="match status" value="1"/>
</dbReference>
<feature type="transit peptide" description="Mitochondrion" evidence="2">
    <location>
        <begin position="1"/>
        <end status="unknown"/>
    </location>
</feature>
<feature type="chain" id="PRO_0000342183" description="Delta-1-pyrroline-5-carboxylate dehydrogenase, mitochondrial">
    <location>
        <begin status="unknown"/>
        <end position="558"/>
    </location>
</feature>
<feature type="active site" description="Proton acceptor" evidence="3 4">
    <location>
        <position position="306"/>
    </location>
</feature>
<feature type="active site" description="Nucleophile" evidence="3 4">
    <location>
        <position position="340"/>
    </location>
</feature>
<feature type="binding site" evidence="1">
    <location>
        <position position="198"/>
    </location>
    <ligand>
        <name>NAD(+)</name>
        <dbReference type="ChEBI" id="CHEBI:57540"/>
    </ligand>
</feature>
<feature type="binding site" evidence="1">
    <location>
        <position position="223"/>
    </location>
    <ligand>
        <name>NAD(+)</name>
        <dbReference type="ChEBI" id="CHEBI:57540"/>
    </ligand>
</feature>
<feature type="binding site" evidence="1">
    <location>
        <begin position="276"/>
        <end position="280"/>
    </location>
    <ligand>
        <name>NAD(+)</name>
        <dbReference type="ChEBI" id="CHEBI:57540"/>
    </ligand>
</feature>
<feature type="binding site" evidence="1">
    <location>
        <position position="438"/>
    </location>
    <ligand>
        <name>NAD(+)</name>
        <dbReference type="ChEBI" id="CHEBI:57540"/>
    </ligand>
</feature>
<feature type="site" description="Transition state stabilizer" evidence="1">
    <location>
        <position position="201"/>
    </location>
</feature>
<name>AL4A1_DICDI</name>
<accession>Q54RA2</accession>
<proteinExistence type="inferred from homology"/>
<evidence type="ECO:0000250" key="1"/>
<evidence type="ECO:0000255" key="2"/>
<evidence type="ECO:0000255" key="3">
    <source>
        <dbReference type="PROSITE-ProRule" id="PRU10007"/>
    </source>
</evidence>
<evidence type="ECO:0000255" key="4">
    <source>
        <dbReference type="PROSITE-ProRule" id="PRU10008"/>
    </source>
</evidence>
<evidence type="ECO:0000305" key="5"/>
<keyword id="KW-0496">Mitochondrion</keyword>
<keyword id="KW-0520">NAD</keyword>
<keyword id="KW-0560">Oxidoreductase</keyword>
<keyword id="KW-0642">Proline metabolism</keyword>
<keyword id="KW-1185">Reference proteome</keyword>
<keyword id="KW-0809">Transit peptide</keyword>
<comment type="function">
    <text evidence="1">Irreversible conversion of delta-1-pyrroline-5-carboxylate (P5C), derived either from proline or ornithine, to glutamate. This is a necessary step in the pathway interconnecting the urea and tricarboxylic acid cycles (By similarity).</text>
</comment>
<comment type="catalytic activity">
    <reaction>
        <text>L-glutamate 5-semialdehyde + NAD(+) + H2O = L-glutamate + NADH + 2 H(+)</text>
        <dbReference type="Rhea" id="RHEA:30235"/>
        <dbReference type="ChEBI" id="CHEBI:15377"/>
        <dbReference type="ChEBI" id="CHEBI:15378"/>
        <dbReference type="ChEBI" id="CHEBI:29985"/>
        <dbReference type="ChEBI" id="CHEBI:57540"/>
        <dbReference type="ChEBI" id="CHEBI:57945"/>
        <dbReference type="ChEBI" id="CHEBI:58066"/>
        <dbReference type="EC" id="1.2.1.88"/>
    </reaction>
</comment>
<comment type="pathway">
    <text>Amino-acid degradation; L-proline degradation into L-glutamate; L-glutamate from L-proline: step 2/2.</text>
</comment>
<comment type="subcellular location">
    <subcellularLocation>
        <location evidence="1">Mitochondrion matrix</location>
    </subcellularLocation>
</comment>
<comment type="similarity">
    <text evidence="5">Belongs to the aldehyde dehydrogenase family.</text>
</comment>
<protein>
    <recommendedName>
        <fullName>Delta-1-pyrroline-5-carboxylate dehydrogenase, mitochondrial</fullName>
        <shortName>P5C dehydrogenase</shortName>
        <ecNumber>1.2.1.88</ecNumber>
    </recommendedName>
    <alternativeName>
        <fullName>Aldehyde dehydrogenase family 4 member A1 homolog</fullName>
    </alternativeName>
    <alternativeName>
        <fullName>L-glutamate gamma-semialdehyde dehydrogenase</fullName>
    </alternativeName>
</protein>
<organism>
    <name type="scientific">Dictyostelium discoideum</name>
    <name type="common">Social amoeba</name>
    <dbReference type="NCBI Taxonomy" id="44689"/>
    <lineage>
        <taxon>Eukaryota</taxon>
        <taxon>Amoebozoa</taxon>
        <taxon>Evosea</taxon>
        <taxon>Eumycetozoa</taxon>
        <taxon>Dictyostelia</taxon>
        <taxon>Dictyosteliales</taxon>
        <taxon>Dictyosteliaceae</taxon>
        <taxon>Dictyostelium</taxon>
    </lineage>
</organism>
<reference key="1">
    <citation type="journal article" date="2005" name="Nature">
        <title>The genome of the social amoeba Dictyostelium discoideum.</title>
        <authorList>
            <person name="Eichinger L."/>
            <person name="Pachebat J.A."/>
            <person name="Gloeckner G."/>
            <person name="Rajandream M.A."/>
            <person name="Sucgang R."/>
            <person name="Berriman M."/>
            <person name="Song J."/>
            <person name="Olsen R."/>
            <person name="Szafranski K."/>
            <person name="Xu Q."/>
            <person name="Tunggal B."/>
            <person name="Kummerfeld S."/>
            <person name="Madera M."/>
            <person name="Konfortov B.A."/>
            <person name="Rivero F."/>
            <person name="Bankier A.T."/>
            <person name="Lehmann R."/>
            <person name="Hamlin N."/>
            <person name="Davies R."/>
            <person name="Gaudet P."/>
            <person name="Fey P."/>
            <person name="Pilcher K."/>
            <person name="Chen G."/>
            <person name="Saunders D."/>
            <person name="Sodergren E.J."/>
            <person name="Davis P."/>
            <person name="Kerhornou A."/>
            <person name="Nie X."/>
            <person name="Hall N."/>
            <person name="Anjard C."/>
            <person name="Hemphill L."/>
            <person name="Bason N."/>
            <person name="Farbrother P."/>
            <person name="Desany B."/>
            <person name="Just E."/>
            <person name="Morio T."/>
            <person name="Rost R."/>
            <person name="Churcher C.M."/>
            <person name="Cooper J."/>
            <person name="Haydock S."/>
            <person name="van Driessche N."/>
            <person name="Cronin A."/>
            <person name="Goodhead I."/>
            <person name="Muzny D.M."/>
            <person name="Mourier T."/>
            <person name="Pain A."/>
            <person name="Lu M."/>
            <person name="Harper D."/>
            <person name="Lindsay R."/>
            <person name="Hauser H."/>
            <person name="James K.D."/>
            <person name="Quiles M."/>
            <person name="Madan Babu M."/>
            <person name="Saito T."/>
            <person name="Buchrieser C."/>
            <person name="Wardroper A."/>
            <person name="Felder M."/>
            <person name="Thangavelu M."/>
            <person name="Johnson D."/>
            <person name="Knights A."/>
            <person name="Loulseged H."/>
            <person name="Mungall K.L."/>
            <person name="Oliver K."/>
            <person name="Price C."/>
            <person name="Quail M.A."/>
            <person name="Urushihara H."/>
            <person name="Hernandez J."/>
            <person name="Rabbinowitsch E."/>
            <person name="Steffen D."/>
            <person name="Sanders M."/>
            <person name="Ma J."/>
            <person name="Kohara Y."/>
            <person name="Sharp S."/>
            <person name="Simmonds M.N."/>
            <person name="Spiegler S."/>
            <person name="Tivey A."/>
            <person name="Sugano S."/>
            <person name="White B."/>
            <person name="Walker D."/>
            <person name="Woodward J.R."/>
            <person name="Winckler T."/>
            <person name="Tanaka Y."/>
            <person name="Shaulsky G."/>
            <person name="Schleicher M."/>
            <person name="Weinstock G.M."/>
            <person name="Rosenthal A."/>
            <person name="Cox E.C."/>
            <person name="Chisholm R.L."/>
            <person name="Gibbs R.A."/>
            <person name="Loomis W.F."/>
            <person name="Platzer M."/>
            <person name="Kay R.R."/>
            <person name="Williams J.G."/>
            <person name="Dear P.H."/>
            <person name="Noegel A.A."/>
            <person name="Barrell B.G."/>
            <person name="Kuspa A."/>
        </authorList>
    </citation>
    <scope>NUCLEOTIDE SEQUENCE [LARGE SCALE GENOMIC DNA]</scope>
    <source>
        <strain>AX4</strain>
    </source>
</reference>
<sequence>MLRNTSRVLMSHFARANIPTPVNQPMLNYEVGSTHRKLLKEACAKFRNTTIDIPCVVGGKEIRTGDVQKQLICSDHNKVLATFHQANAELLKLAVENSMESKAQWESLPFEARSAVFLKAADLLNTKYRYDVLASTMLGQGKTVWQAEIDAAAEGIDFLRFNVKYAQEIYQQQPPANSAGCWNILTYQPLEGYVVAISPFNFTAIGLNLSSAPALMGNVVLWKPASTAVLSNWIVYKALLEAGLPAGVIQFLPGSGRLVGEHLFNNRNFSGLHFTGSTGVFNDIYKKTADNLVAGVYKGYPRIVGETGGKDFHFLHNSGDVENFVNNTLRGAFEYQGQKCSACSRAYIPQSLWPQIKDRLVTGVKSMKMGQSDDFSSFVSAVIDKNSFNNIQSYIEHAKASPDAEIIVGGKCDSSVGWFVEPTIILAKDPHYKSMEEEIFGPVLTIYVYEDSKFEETLKICDETSPYALTGSIFSTCRYAIETAHKYLKNAAGNFYINDKCTGAVVGQQPFGGSRASGTNDKAGSSLNLLRWISARTIKENFVPLTSFTYPYMIDPEN</sequence>